<keyword id="KW-0961">Cell wall biogenesis/degradation</keyword>
<keyword id="KW-0963">Cytoplasm</keyword>
<keyword id="KW-0596">Phosphopantetheine</keyword>
<keyword id="KW-0597">Phosphoprotein</keyword>
<comment type="function">
    <text evidence="1">Carrier protein involved in the D-alanylation of lipoteichoic acid (LTA). The loading of thioester-linked D-alanine onto DltC is catalyzed by D-alanine--D-alanyl carrier protein ligase DltA. The DltC-carried D-alanyl group is further transferred to cell membrane phosphatidylglycerol (PG) by forming an ester bond, probably catalyzed by DltD. D-alanylation of LTA plays an important role in modulating the properties of the cell wall in Gram-positive bacteria, influencing the net charge of the cell wall.</text>
</comment>
<comment type="pathway">
    <text evidence="1">Cell wall biogenesis; lipoteichoic acid biosynthesis.</text>
</comment>
<comment type="subcellular location">
    <subcellularLocation>
        <location evidence="1">Cytoplasm</location>
    </subcellularLocation>
</comment>
<comment type="PTM">
    <text evidence="1">4'-phosphopantetheine is transferred from CoA to a specific serine of apo-DCP.</text>
</comment>
<comment type="similarity">
    <text evidence="1">Belongs to the DltC family.</text>
</comment>
<organism>
    <name type="scientific">Listeria innocua serovar 6a (strain ATCC BAA-680 / CLIP 11262)</name>
    <dbReference type="NCBI Taxonomy" id="272626"/>
    <lineage>
        <taxon>Bacteria</taxon>
        <taxon>Bacillati</taxon>
        <taxon>Bacillota</taxon>
        <taxon>Bacilli</taxon>
        <taxon>Bacillales</taxon>
        <taxon>Listeriaceae</taxon>
        <taxon>Listeria</taxon>
    </lineage>
</organism>
<dbReference type="EMBL" id="AL596167">
    <property type="protein sequence ID" value="CAC96202.1"/>
    <property type="molecule type" value="Genomic_DNA"/>
</dbReference>
<dbReference type="PIR" id="AB1554">
    <property type="entry name" value="AB1554"/>
</dbReference>
<dbReference type="RefSeq" id="WP_003761466.1">
    <property type="nucleotide sequence ID" value="NC_003212.1"/>
</dbReference>
<dbReference type="SMR" id="Q92D49"/>
<dbReference type="STRING" id="272626.gene:17565301"/>
<dbReference type="GeneID" id="93234418"/>
<dbReference type="KEGG" id="lin:dltC"/>
<dbReference type="eggNOG" id="COG0236">
    <property type="taxonomic scope" value="Bacteria"/>
</dbReference>
<dbReference type="HOGENOM" id="CLU_108696_19_0_9"/>
<dbReference type="OrthoDB" id="6462171at2"/>
<dbReference type="UniPathway" id="UPA00556"/>
<dbReference type="Proteomes" id="UP000002513">
    <property type="component" value="Chromosome"/>
</dbReference>
<dbReference type="GO" id="GO:0005737">
    <property type="term" value="C:cytoplasm"/>
    <property type="evidence" value="ECO:0007669"/>
    <property type="project" value="UniProtKB-SubCell"/>
</dbReference>
<dbReference type="GO" id="GO:0036370">
    <property type="term" value="F:D-alanyl carrier activity"/>
    <property type="evidence" value="ECO:0007669"/>
    <property type="project" value="UniProtKB-UniRule"/>
</dbReference>
<dbReference type="GO" id="GO:0071555">
    <property type="term" value="P:cell wall organization"/>
    <property type="evidence" value="ECO:0007669"/>
    <property type="project" value="UniProtKB-KW"/>
</dbReference>
<dbReference type="GO" id="GO:0070395">
    <property type="term" value="P:lipoteichoic acid biosynthetic process"/>
    <property type="evidence" value="ECO:0007669"/>
    <property type="project" value="UniProtKB-UniRule"/>
</dbReference>
<dbReference type="FunFam" id="1.10.1200.10:FF:000004">
    <property type="entry name" value="D-alanyl carrier protein"/>
    <property type="match status" value="1"/>
</dbReference>
<dbReference type="Gene3D" id="1.10.1200.10">
    <property type="entry name" value="ACP-like"/>
    <property type="match status" value="1"/>
</dbReference>
<dbReference type="HAMAP" id="MF_00565">
    <property type="entry name" value="DltC"/>
    <property type="match status" value="1"/>
</dbReference>
<dbReference type="InterPro" id="IPR036736">
    <property type="entry name" value="ACP-like_sf"/>
</dbReference>
<dbReference type="InterPro" id="IPR003230">
    <property type="entry name" value="DltC"/>
</dbReference>
<dbReference type="InterPro" id="IPR009081">
    <property type="entry name" value="PP-bd_ACP"/>
</dbReference>
<dbReference type="NCBIfam" id="TIGR01688">
    <property type="entry name" value="dltC"/>
    <property type="match status" value="1"/>
</dbReference>
<dbReference type="NCBIfam" id="NF003464">
    <property type="entry name" value="PRK05087.1"/>
    <property type="match status" value="1"/>
</dbReference>
<dbReference type="Pfam" id="PF00550">
    <property type="entry name" value="PP-binding"/>
    <property type="match status" value="1"/>
</dbReference>
<dbReference type="SUPFAM" id="SSF47336">
    <property type="entry name" value="ACP-like"/>
    <property type="match status" value="1"/>
</dbReference>
<dbReference type="PROSITE" id="PS50075">
    <property type="entry name" value="CARRIER"/>
    <property type="match status" value="1"/>
</dbReference>
<evidence type="ECO:0000255" key="1">
    <source>
        <dbReference type="HAMAP-Rule" id="MF_00565"/>
    </source>
</evidence>
<sequence>MAFRENVLEILEEITETDEVVQNTNIKLFDEGLLDSMATVQLLIEIESRLDITVPVSEFDRDEWATPEMIITQLEALK</sequence>
<feature type="chain" id="PRO_0000213094" description="D-alanyl carrier protein">
    <location>
        <begin position="1"/>
        <end position="78"/>
    </location>
</feature>
<feature type="domain" description="Carrier" evidence="1">
    <location>
        <begin position="1"/>
        <end position="78"/>
    </location>
</feature>
<feature type="modified residue" description="O-(pantetheine 4'-phosphoryl)serine" evidence="1">
    <location>
        <position position="36"/>
    </location>
</feature>
<accession>Q92D49</accession>
<gene>
    <name evidence="1" type="primary">dltC</name>
    <name type="ordered locus">lin0971</name>
</gene>
<name>DLTC_LISIN</name>
<reference key="1">
    <citation type="journal article" date="2001" name="Science">
        <title>Comparative genomics of Listeria species.</title>
        <authorList>
            <person name="Glaser P."/>
            <person name="Frangeul L."/>
            <person name="Buchrieser C."/>
            <person name="Rusniok C."/>
            <person name="Amend A."/>
            <person name="Baquero F."/>
            <person name="Berche P."/>
            <person name="Bloecker H."/>
            <person name="Brandt P."/>
            <person name="Chakraborty T."/>
            <person name="Charbit A."/>
            <person name="Chetouani F."/>
            <person name="Couve E."/>
            <person name="de Daruvar A."/>
            <person name="Dehoux P."/>
            <person name="Domann E."/>
            <person name="Dominguez-Bernal G."/>
            <person name="Duchaud E."/>
            <person name="Durant L."/>
            <person name="Dussurget O."/>
            <person name="Entian K.-D."/>
            <person name="Fsihi H."/>
            <person name="Garcia-del Portillo F."/>
            <person name="Garrido P."/>
            <person name="Gautier L."/>
            <person name="Goebel W."/>
            <person name="Gomez-Lopez N."/>
            <person name="Hain T."/>
            <person name="Hauf J."/>
            <person name="Jackson D."/>
            <person name="Jones L.-M."/>
            <person name="Kaerst U."/>
            <person name="Kreft J."/>
            <person name="Kuhn M."/>
            <person name="Kunst F."/>
            <person name="Kurapkat G."/>
            <person name="Madueno E."/>
            <person name="Maitournam A."/>
            <person name="Mata Vicente J."/>
            <person name="Ng E."/>
            <person name="Nedjari H."/>
            <person name="Nordsiek G."/>
            <person name="Novella S."/>
            <person name="de Pablos B."/>
            <person name="Perez-Diaz J.-C."/>
            <person name="Purcell R."/>
            <person name="Remmel B."/>
            <person name="Rose M."/>
            <person name="Schlueter T."/>
            <person name="Simoes N."/>
            <person name="Tierrez A."/>
            <person name="Vazquez-Boland J.-A."/>
            <person name="Voss H."/>
            <person name="Wehland J."/>
            <person name="Cossart P."/>
        </authorList>
    </citation>
    <scope>NUCLEOTIDE SEQUENCE [LARGE SCALE GENOMIC DNA]</scope>
    <source>
        <strain>ATCC BAA-680 / CLIP 11262</strain>
    </source>
</reference>
<proteinExistence type="inferred from homology"/>
<protein>
    <recommendedName>
        <fullName evidence="1">D-alanyl carrier protein</fullName>
        <shortName evidence="1">DCP</shortName>
    </recommendedName>
    <alternativeName>
        <fullName evidence="1">D-alanine--poly(phosphoribitol) ligase subunit 2</fullName>
    </alternativeName>
</protein>